<protein>
    <recommendedName>
        <fullName evidence="1">Multidrug resistance protein MdtH</fullName>
    </recommendedName>
</protein>
<feature type="chain" id="PRO_1000185163" description="Multidrug resistance protein MdtH">
    <location>
        <begin position="1"/>
        <end position="397"/>
    </location>
</feature>
<feature type="transmembrane region" description="Helical" evidence="1">
    <location>
        <begin position="11"/>
        <end position="31"/>
    </location>
</feature>
<feature type="transmembrane region" description="Helical" evidence="1">
    <location>
        <begin position="71"/>
        <end position="91"/>
    </location>
</feature>
<feature type="transmembrane region" description="Helical" evidence="1">
    <location>
        <begin position="94"/>
        <end position="114"/>
    </location>
</feature>
<feature type="transmembrane region" description="Helical" evidence="1">
    <location>
        <begin position="137"/>
        <end position="157"/>
    </location>
</feature>
<feature type="transmembrane region" description="Helical" evidence="1">
    <location>
        <begin position="163"/>
        <end position="183"/>
    </location>
</feature>
<feature type="transmembrane region" description="Helical" evidence="1">
    <location>
        <begin position="211"/>
        <end position="231"/>
    </location>
</feature>
<feature type="transmembrane region" description="Helical" evidence="1">
    <location>
        <begin position="242"/>
        <end position="262"/>
    </location>
</feature>
<feature type="transmembrane region" description="Helical" evidence="1">
    <location>
        <begin position="291"/>
        <end position="311"/>
    </location>
</feature>
<feature type="transmembrane region" description="Helical" evidence="1">
    <location>
        <begin position="338"/>
        <end position="358"/>
    </location>
</feature>
<feature type="transmembrane region" description="Helical" evidence="1">
    <location>
        <begin position="366"/>
        <end position="386"/>
    </location>
</feature>
<reference key="1">
    <citation type="journal article" date="2008" name="BMC Genomics">
        <title>The genome of Aeromonas salmonicida subsp. salmonicida A449: insights into the evolution of a fish pathogen.</title>
        <authorList>
            <person name="Reith M.E."/>
            <person name="Singh R.K."/>
            <person name="Curtis B."/>
            <person name="Boyd J.M."/>
            <person name="Bouevitch A."/>
            <person name="Kimball J."/>
            <person name="Munholland J."/>
            <person name="Murphy C."/>
            <person name="Sarty D."/>
            <person name="Williams J."/>
            <person name="Nash J.H."/>
            <person name="Johnson S.C."/>
            <person name="Brown L.L."/>
        </authorList>
    </citation>
    <scope>NUCLEOTIDE SEQUENCE [LARGE SCALE GENOMIC DNA]</scope>
    <source>
        <strain>A449</strain>
    </source>
</reference>
<name>MDTH_AERS4</name>
<evidence type="ECO:0000255" key="1">
    <source>
        <dbReference type="HAMAP-Rule" id="MF_01529"/>
    </source>
</evidence>
<accession>A4SR87</accession>
<comment type="subcellular location">
    <subcellularLocation>
        <location evidence="1">Cell inner membrane</location>
        <topology evidence="1">Multi-pass membrane protein</topology>
    </subcellularLocation>
</comment>
<comment type="similarity">
    <text evidence="1">Belongs to the major facilitator superfamily. DHA1 family. MdtH (TC 2.A.1.2.21) subfamily.</text>
</comment>
<gene>
    <name evidence="1" type="primary">mdtH</name>
    <name type="ordered locus">ASA_3438</name>
</gene>
<proteinExistence type="inferred from homology"/>
<keyword id="KW-0997">Cell inner membrane</keyword>
<keyword id="KW-1003">Cell membrane</keyword>
<keyword id="KW-0472">Membrane</keyword>
<keyword id="KW-0812">Transmembrane</keyword>
<keyword id="KW-1133">Transmembrane helix</keyword>
<keyword id="KW-0813">Transport</keyword>
<dbReference type="EMBL" id="CP000644">
    <property type="protein sequence ID" value="ABO91409.1"/>
    <property type="molecule type" value="Genomic_DNA"/>
</dbReference>
<dbReference type="RefSeq" id="WP_011899059.1">
    <property type="nucleotide sequence ID" value="NC_009348.1"/>
</dbReference>
<dbReference type="SMR" id="A4SR87"/>
<dbReference type="STRING" id="29491.GCA_000820065_04361"/>
<dbReference type="KEGG" id="asa:ASA_3438"/>
<dbReference type="PATRIC" id="fig|382245.13.peg.3423"/>
<dbReference type="eggNOG" id="COG0477">
    <property type="taxonomic scope" value="Bacteria"/>
</dbReference>
<dbReference type="HOGENOM" id="CLU_001265_60_2_6"/>
<dbReference type="Proteomes" id="UP000000225">
    <property type="component" value="Chromosome"/>
</dbReference>
<dbReference type="GO" id="GO:0005886">
    <property type="term" value="C:plasma membrane"/>
    <property type="evidence" value="ECO:0007669"/>
    <property type="project" value="UniProtKB-SubCell"/>
</dbReference>
<dbReference type="GO" id="GO:0022857">
    <property type="term" value="F:transmembrane transporter activity"/>
    <property type="evidence" value="ECO:0007669"/>
    <property type="project" value="UniProtKB-UniRule"/>
</dbReference>
<dbReference type="CDD" id="cd17329">
    <property type="entry name" value="MFS_MdtH_MDR_like"/>
    <property type="match status" value="1"/>
</dbReference>
<dbReference type="Gene3D" id="1.20.1250.20">
    <property type="entry name" value="MFS general substrate transporter like domains"/>
    <property type="match status" value="1"/>
</dbReference>
<dbReference type="HAMAP" id="MF_01529">
    <property type="entry name" value="MFS_MdtH"/>
    <property type="match status" value="1"/>
</dbReference>
<dbReference type="InterPro" id="IPR011701">
    <property type="entry name" value="MFS"/>
</dbReference>
<dbReference type="InterPro" id="IPR020846">
    <property type="entry name" value="MFS_dom"/>
</dbReference>
<dbReference type="InterPro" id="IPR036259">
    <property type="entry name" value="MFS_trans_sf"/>
</dbReference>
<dbReference type="InterPro" id="IPR050171">
    <property type="entry name" value="MFS_Transporters"/>
</dbReference>
<dbReference type="InterPro" id="IPR022855">
    <property type="entry name" value="Multidrug-R_MdtH"/>
</dbReference>
<dbReference type="NCBIfam" id="NF008650">
    <property type="entry name" value="PRK11646.1"/>
    <property type="match status" value="1"/>
</dbReference>
<dbReference type="PANTHER" id="PTHR23517:SF2">
    <property type="entry name" value="MULTIDRUG RESISTANCE PROTEIN MDTH"/>
    <property type="match status" value="1"/>
</dbReference>
<dbReference type="PANTHER" id="PTHR23517">
    <property type="entry name" value="RESISTANCE PROTEIN MDTM, PUTATIVE-RELATED-RELATED"/>
    <property type="match status" value="1"/>
</dbReference>
<dbReference type="Pfam" id="PF07690">
    <property type="entry name" value="MFS_1"/>
    <property type="match status" value="1"/>
</dbReference>
<dbReference type="SUPFAM" id="SSF103473">
    <property type="entry name" value="MFS general substrate transporter"/>
    <property type="match status" value="1"/>
</dbReference>
<dbReference type="PROSITE" id="PS50850">
    <property type="entry name" value="MFS"/>
    <property type="match status" value="1"/>
</dbReference>
<sequence length="397" mass="42748">MVERARRLGRWFLALDSLLVILGFFVVMPMISLRFVDQQGWAAGIVGLALGLRQLTQQGLGVLGGSLADKFGARPLIVGGMLLRAAGFASLAYAQSGLELILSCIISGLGGCLFDPPRAALVIKFTRPRQRGRYISLLMMLESAGAVVGALLGSWLLNFDFEYVCLLGAGLFVCAALCNLLILPPYKLSQRPTPIRAGLGQVLADKAFCRLVLILSGYYALWVQVMLIFPILVKQMAGTTTAVGWMYTLETAISLTLLYPLARYGEKHFKLENRLMAGVLLMTTGIGLVAFATTLPAVFVLLACFYLGIVIAEPARETLMTKLAQPGARGSYMGFSRLGLALGGMTGYVGGGALHDYANAQGQPWLPWLVLGTVGVTTLLLLVNCFHREPSLARVNI</sequence>
<organism>
    <name type="scientific">Aeromonas salmonicida (strain A449)</name>
    <dbReference type="NCBI Taxonomy" id="382245"/>
    <lineage>
        <taxon>Bacteria</taxon>
        <taxon>Pseudomonadati</taxon>
        <taxon>Pseudomonadota</taxon>
        <taxon>Gammaproteobacteria</taxon>
        <taxon>Aeromonadales</taxon>
        <taxon>Aeromonadaceae</taxon>
        <taxon>Aeromonas</taxon>
    </lineage>
</organism>